<comment type="function">
    <text evidence="1 4">Catalyzes the dehydrogenation of (R)-2-hydroxyglutarate (D-2-hydroxyglutarate) to 2-oxoglutarate. Also has a low activity on D-malate in vitro (PubMed:34555022). Is functionally tied to L-serine biosynthesis, via its coupling with the D-3-phosphoglycerate dehydrogenase SerA, encoded by the adjacent gene in the locus (By similarity). Active in vitro with the artificial electron acceptor 2,6-dichlorophenolindophenol (DCPIP), but not with NAD, NADP, or cytochrome c. Also displays a very low oxidase activity in vitro on D-2-hydroxyglutarate and L-2-hydroxyglutarate with O2 as the electron acceptor, but this activity is most likely not physiological (PubMed:34555022).</text>
</comment>
<comment type="catalytic activity">
    <reaction evidence="4">
        <text>(R)-2-hydroxyglutarate + A = 2-oxoglutarate + AH2</text>
        <dbReference type="Rhea" id="RHEA:38295"/>
        <dbReference type="ChEBI" id="CHEBI:13193"/>
        <dbReference type="ChEBI" id="CHEBI:15801"/>
        <dbReference type="ChEBI" id="CHEBI:16810"/>
        <dbReference type="ChEBI" id="CHEBI:17499"/>
        <dbReference type="EC" id="1.1.99.39"/>
    </reaction>
    <physiologicalReaction direction="left-to-right" evidence="6">
        <dbReference type="Rhea" id="RHEA:38296"/>
    </physiologicalReaction>
</comment>
<comment type="catalytic activity">
    <reaction evidence="4">
        <text>(R)-malate + A = oxaloacetate + AH2</text>
        <dbReference type="Rhea" id="RHEA:67460"/>
        <dbReference type="ChEBI" id="CHEBI:13193"/>
        <dbReference type="ChEBI" id="CHEBI:15588"/>
        <dbReference type="ChEBI" id="CHEBI:16452"/>
        <dbReference type="ChEBI" id="CHEBI:17499"/>
    </reaction>
</comment>
<comment type="cofactor">
    <cofactor evidence="1">
        <name>FAD</name>
        <dbReference type="ChEBI" id="CHEBI:57692"/>
    </cofactor>
    <text evidence="1">Binds 1 FAD per subunit.</text>
</comment>
<comment type="activity regulation">
    <text evidence="1">Activated by Zn(2+) ions.</text>
</comment>
<comment type="biophysicochemical properties">
    <kinetics>
        <KM evidence="4">0.08 mM for D-2-hydroxyglutarate (at pH 7.4 and 25 degrees Celsius)</KM>
        <KM evidence="4">5.03 mM for D-malate (at pH 7.4 and 25 degrees Celsius)</KM>
        <text evidence="4">kcat is 5.9 sec(-1) with D-2-hydroxyglutarate as substrate and DCPIP as electron acceptor (at pH 7.4 and 25 degrees Celsius). kcat is 0.04 sec(-1) with D-malate as substrate and DCPIP as electron acceptor (at pH 7.4 and 25 degrees Celsius).</text>
    </kinetics>
</comment>
<comment type="subunit">
    <text evidence="1">Homodimer.</text>
</comment>
<comment type="similarity">
    <text evidence="6">Belongs to the FAD-binding oxidoreductase/transferase type 4 family.</text>
</comment>
<reference key="1">
    <citation type="journal article" date="2014" name="Appl. Environ. Microbiol.">
        <title>Genomic insights into the evolutionary origin of Xanthomonas axonopodis pv. citri and its ecological relatives.</title>
        <authorList>
            <person name="Midha S."/>
            <person name="Patil P.B."/>
        </authorList>
    </citation>
    <scope>NUCLEOTIDE SEQUENCE [LARGE SCALE GENOMIC DNA]</scope>
    <source>
        <strain>LMG 965 / NCPPB 2475 / ICMP 3867 / CFBP 7660</strain>
    </source>
</reference>
<reference key="2">
    <citation type="journal article" date="2021" name="PLoS Comput. Biol.">
        <title>Experimental and computational investigation of enzyme functional annotations uncovers misannotation in the EC 1.1.3.15 enzyme class.</title>
        <authorList>
            <person name="Rembeza E."/>
            <person name="Engqvist M.K.M."/>
        </authorList>
    </citation>
    <scope>FUNCTION</scope>
    <scope>CATALYTIC ACTIVITY</scope>
    <scope>BIOPHYSICOCHEMICAL PROPERTIES</scope>
</reference>
<gene>
    <name evidence="7" type="ORF">XVT_549</name>
</gene>
<name>D2HDH_XANCL</name>
<dbReference type="EC" id="1.1.99.39" evidence="4"/>
<dbReference type="EMBL" id="CBZT010000001">
    <property type="protein sequence ID" value="CDN17902.1"/>
    <property type="molecule type" value="Genomic_DNA"/>
</dbReference>
<dbReference type="GO" id="GO:0071949">
    <property type="term" value="F:FAD binding"/>
    <property type="evidence" value="ECO:0007669"/>
    <property type="project" value="InterPro"/>
</dbReference>
<dbReference type="GO" id="GO:0046872">
    <property type="term" value="F:metal ion binding"/>
    <property type="evidence" value="ECO:0007669"/>
    <property type="project" value="UniProtKB-KW"/>
</dbReference>
<dbReference type="GO" id="GO:0016491">
    <property type="term" value="F:oxidoreductase activity"/>
    <property type="evidence" value="ECO:0007669"/>
    <property type="project" value="UniProtKB-KW"/>
</dbReference>
<dbReference type="GO" id="GO:0022904">
    <property type="term" value="P:respiratory electron transport chain"/>
    <property type="evidence" value="ECO:0007669"/>
    <property type="project" value="TreeGrafter"/>
</dbReference>
<dbReference type="FunFam" id="1.10.45.10:FF:000001">
    <property type="entry name" value="D-lactate dehydrogenase mitochondrial"/>
    <property type="match status" value="1"/>
</dbReference>
<dbReference type="FunFam" id="3.30.465.10:FF:000025">
    <property type="entry name" value="FAD-binding oxidoreductase"/>
    <property type="match status" value="1"/>
</dbReference>
<dbReference type="FunFam" id="3.30.70.2740:FF:000005">
    <property type="entry name" value="FAD-binding oxidoreductase"/>
    <property type="match status" value="1"/>
</dbReference>
<dbReference type="Gene3D" id="3.30.465.10">
    <property type="match status" value="1"/>
</dbReference>
<dbReference type="Gene3D" id="3.30.70.2190">
    <property type="match status" value="1"/>
</dbReference>
<dbReference type="Gene3D" id="3.30.70.2740">
    <property type="match status" value="1"/>
</dbReference>
<dbReference type="Gene3D" id="3.30.43.10">
    <property type="entry name" value="Uridine Diphospho-n-acetylenolpyruvylglucosamine Reductase, domain 2"/>
    <property type="match status" value="1"/>
</dbReference>
<dbReference type="Gene3D" id="1.10.45.10">
    <property type="entry name" value="Vanillyl-alcohol Oxidase, Chain A, domain 4"/>
    <property type="match status" value="1"/>
</dbReference>
<dbReference type="InterPro" id="IPR004113">
    <property type="entry name" value="FAD-bd_oxidored_4_C"/>
</dbReference>
<dbReference type="InterPro" id="IPR016166">
    <property type="entry name" value="FAD-bd_PCMH"/>
</dbReference>
<dbReference type="InterPro" id="IPR036318">
    <property type="entry name" value="FAD-bd_PCMH-like_sf"/>
</dbReference>
<dbReference type="InterPro" id="IPR016167">
    <property type="entry name" value="FAD-bd_PCMH_sub1"/>
</dbReference>
<dbReference type="InterPro" id="IPR016169">
    <property type="entry name" value="FAD-bd_PCMH_sub2"/>
</dbReference>
<dbReference type="InterPro" id="IPR016164">
    <property type="entry name" value="FAD-linked_Oxase-like_C"/>
</dbReference>
<dbReference type="InterPro" id="IPR051264">
    <property type="entry name" value="FAD-oxidored/transferase_4"/>
</dbReference>
<dbReference type="InterPro" id="IPR006094">
    <property type="entry name" value="Oxid_FAD_bind_N"/>
</dbReference>
<dbReference type="InterPro" id="IPR016171">
    <property type="entry name" value="Vanillyl_alc_oxidase_C-sub2"/>
</dbReference>
<dbReference type="PANTHER" id="PTHR43716">
    <property type="entry name" value="D-2-HYDROXYGLUTARATE DEHYDROGENASE, MITOCHONDRIAL"/>
    <property type="match status" value="1"/>
</dbReference>
<dbReference type="PANTHER" id="PTHR43716:SF1">
    <property type="entry name" value="D-2-HYDROXYGLUTARATE DEHYDROGENASE, MITOCHONDRIAL"/>
    <property type="match status" value="1"/>
</dbReference>
<dbReference type="Pfam" id="PF02913">
    <property type="entry name" value="FAD-oxidase_C"/>
    <property type="match status" value="1"/>
</dbReference>
<dbReference type="Pfam" id="PF01565">
    <property type="entry name" value="FAD_binding_4"/>
    <property type="match status" value="1"/>
</dbReference>
<dbReference type="SUPFAM" id="SSF56176">
    <property type="entry name" value="FAD-binding/transporter-associated domain-like"/>
    <property type="match status" value="1"/>
</dbReference>
<dbReference type="SUPFAM" id="SSF55103">
    <property type="entry name" value="FAD-linked oxidases, C-terminal domain"/>
    <property type="match status" value="1"/>
</dbReference>
<dbReference type="PROSITE" id="PS51387">
    <property type="entry name" value="FAD_PCMH"/>
    <property type="match status" value="1"/>
</dbReference>
<accession>P0DV35</accession>
<evidence type="ECO:0000250" key="1">
    <source>
        <dbReference type="UniProtKB" id="A4VGK4"/>
    </source>
</evidence>
<evidence type="ECO:0000250" key="2">
    <source>
        <dbReference type="UniProtKB" id="Q8N465"/>
    </source>
</evidence>
<evidence type="ECO:0000255" key="3">
    <source>
        <dbReference type="PROSITE-ProRule" id="PRU00718"/>
    </source>
</evidence>
<evidence type="ECO:0000269" key="4">
    <source>
    </source>
</evidence>
<evidence type="ECO:0000303" key="5">
    <source>
    </source>
</evidence>
<evidence type="ECO:0000305" key="6"/>
<evidence type="ECO:0000312" key="7">
    <source>
        <dbReference type="EMBL" id="CDN17902.1"/>
    </source>
</evidence>
<protein>
    <recommendedName>
        <fullName evidence="5">D-2-hydroxyglutarate dehydrogenase</fullName>
        <shortName>D2HGDH</shortName>
        <ecNumber evidence="4">1.1.99.39</ecNumber>
    </recommendedName>
</protein>
<sequence>MTDPRILSLQQAVPALRLKTEPADLEHYGRDWTRRWTPNPLAIALPGSVEEVQAVVRWANAQAVAVVPSGGRTGLSGGAVAANGELVLSLERLNKPLDFNAVDRTLTVQAGMPLEAVHNAAREQGLVYPVDFAARGSCSIGGNIATNAGGIRVIRYGNTREWVAGLKVVTGSGELLELNNALVKNSSGYDFRHLMIGSEGTLGIVVEATLRLTDPPPPSNVMLLALPSFDVLMQVFAAFRAQLRLEAFEFFTDRALEHVLAHGAQAPFAEIHPYYVVTEFAAGDEAQEAAAMAAFETCMEQGWVSDGVISQSDAQAAQLWRLREGITEALARYTPYKNDVSVRISAMPAFLAETQALLHDAYPDFDVVWFGHIGDGNLHINVLKPDATSQADFVAACDQVTKLLAQALQRFDGSISAEHGIGLVKKSYLWSTRSAEEIALMRGIKHVLDPHLLLNPGKLFETHDAPTNIPAG</sequence>
<keyword id="KW-0274">FAD</keyword>
<keyword id="KW-0285">Flavoprotein</keyword>
<keyword id="KW-0479">Metal-binding</keyword>
<keyword id="KW-0560">Oxidoreductase</keyword>
<keyword id="KW-0862">Zinc</keyword>
<organism>
    <name type="scientific">Xanthomonas citri pv. viticola (strain LMG 965 / NCPPB 2475 / ICMP 3867 / CFBP 7660)</name>
    <name type="common">Xanthomonas campestris pv. viticola</name>
    <dbReference type="NCBI Taxonomy" id="1232713"/>
    <lineage>
        <taxon>Bacteria</taxon>
        <taxon>Pseudomonadati</taxon>
        <taxon>Pseudomonadota</taxon>
        <taxon>Gammaproteobacteria</taxon>
        <taxon>Lysobacterales</taxon>
        <taxon>Lysobacteraceae</taxon>
        <taxon>Xanthomonas</taxon>
    </lineage>
</organism>
<proteinExistence type="evidence at protein level"/>
<feature type="chain" id="PRO_0000454852" description="D-2-hydroxyglutarate dehydrogenase">
    <location>
        <begin position="1"/>
        <end position="472"/>
    </location>
</feature>
<feature type="domain" description="FAD-binding PCMH-type" evidence="3">
    <location>
        <begin position="36"/>
        <end position="215"/>
    </location>
</feature>
<feature type="binding site" evidence="2">
    <location>
        <position position="323"/>
    </location>
    <ligand>
        <name>(R)-2-hydroxyglutarate</name>
        <dbReference type="ChEBI" id="CHEBI:15801"/>
    </ligand>
</feature>
<feature type="binding site" evidence="2">
    <location>
        <position position="323"/>
    </location>
    <ligand>
        <name>(R)-malate</name>
        <dbReference type="ChEBI" id="CHEBI:15588"/>
    </ligand>
</feature>
<feature type="binding site" evidence="2">
    <location>
        <position position="327"/>
    </location>
    <ligand>
        <name>(R)-2-hydroxyglutarate</name>
        <dbReference type="ChEBI" id="CHEBI:15801"/>
    </ligand>
</feature>
<feature type="binding site" evidence="2">
    <location>
        <position position="327"/>
    </location>
    <ligand>
        <name>(R)-malate</name>
        <dbReference type="ChEBI" id="CHEBI:15588"/>
    </ligand>
</feature>
<feature type="binding site" evidence="2">
    <location>
        <position position="337"/>
    </location>
    <ligand>
        <name>(R)-2-hydroxyglutarate</name>
        <dbReference type="ChEBI" id="CHEBI:15801"/>
    </ligand>
</feature>
<feature type="binding site" evidence="2">
    <location>
        <position position="337"/>
    </location>
    <ligand>
        <name>(R)-malate</name>
        <dbReference type="ChEBI" id="CHEBI:15588"/>
    </ligand>
</feature>
<feature type="binding site" evidence="2">
    <location>
        <position position="372"/>
    </location>
    <ligand>
        <name>Zn(2+)</name>
        <dbReference type="ChEBI" id="CHEBI:29105"/>
    </ligand>
</feature>
<feature type="binding site" evidence="2">
    <location>
        <position position="379"/>
    </location>
    <ligand>
        <name>Zn(2+)</name>
        <dbReference type="ChEBI" id="CHEBI:29105"/>
    </ligand>
</feature>
<feature type="binding site" evidence="2">
    <location>
        <position position="381"/>
    </location>
    <ligand>
        <name>(R)-2-hydroxyglutarate</name>
        <dbReference type="ChEBI" id="CHEBI:15801"/>
    </ligand>
</feature>
<feature type="binding site" evidence="2">
    <location>
        <position position="418"/>
    </location>
    <ligand>
        <name>Zn(2+)</name>
        <dbReference type="ChEBI" id="CHEBI:29105"/>
    </ligand>
</feature>
<feature type="binding site" evidence="2">
    <location>
        <position position="419"/>
    </location>
    <ligand>
        <name>(R)-2-hydroxyglutarate</name>
        <dbReference type="ChEBI" id="CHEBI:15801"/>
    </ligand>
</feature>
<feature type="binding site" evidence="2">
    <location>
        <position position="419"/>
    </location>
    <ligand>
        <name>(R)-malate</name>
        <dbReference type="ChEBI" id="CHEBI:15588"/>
    </ligand>
</feature>